<dbReference type="EMBL" id="AY653733">
    <property type="protein sequence ID" value="AAV50553.1"/>
    <property type="molecule type" value="Genomic_DNA"/>
</dbReference>
<dbReference type="SMR" id="Q5UPW6"/>
<dbReference type="KEGG" id="vg:9924896"/>
<dbReference type="Proteomes" id="UP000001134">
    <property type="component" value="Genome"/>
</dbReference>
<dbReference type="InterPro" id="IPR008615">
    <property type="entry name" value="FNIP"/>
</dbReference>
<dbReference type="InterPro" id="IPR051251">
    <property type="entry name" value="STK_FNIP-Repeat"/>
</dbReference>
<dbReference type="PANTHER" id="PTHR32134">
    <property type="entry name" value="FNIP REPEAT-CONTAINING PROTEIN"/>
    <property type="match status" value="1"/>
</dbReference>
<dbReference type="PANTHER" id="PTHR32134:SF173">
    <property type="entry name" value="FNIP REPEAT-CONTAINING PROTEIN-RELATED"/>
    <property type="match status" value="1"/>
</dbReference>
<dbReference type="Pfam" id="PF05725">
    <property type="entry name" value="FNIP"/>
    <property type="match status" value="1"/>
</dbReference>
<feature type="chain" id="PRO_0000253237" description="Putative FNIP repeat-containing protein L281">
    <location>
        <begin position="1"/>
        <end position="292"/>
    </location>
</feature>
<feature type="repeat" description="FNIP">
    <location>
        <begin position="95"/>
        <end position="134"/>
    </location>
</feature>
<keyword id="KW-1185">Reference proteome</keyword>
<protein>
    <recommendedName>
        <fullName>Putative FNIP repeat-containing protein L281</fullName>
    </recommendedName>
</protein>
<accession>Q5UPW6</accession>
<organism>
    <name type="scientific">Acanthamoeba polyphaga mimivirus</name>
    <name type="common">APMV</name>
    <dbReference type="NCBI Taxonomy" id="212035"/>
    <lineage>
        <taxon>Viruses</taxon>
        <taxon>Varidnaviria</taxon>
        <taxon>Bamfordvirae</taxon>
        <taxon>Nucleocytoviricota</taxon>
        <taxon>Megaviricetes</taxon>
        <taxon>Imitervirales</taxon>
        <taxon>Mimiviridae</taxon>
        <taxon>Megamimivirinae</taxon>
        <taxon>Mimivirus</taxon>
        <taxon>Mimivirus bradfordmassiliense</taxon>
    </lineage>
</organism>
<name>YL281_MIMIV</name>
<proteinExistence type="predicted"/>
<organismHost>
    <name type="scientific">Acanthamoeba polyphaga</name>
    <name type="common">Amoeba</name>
    <dbReference type="NCBI Taxonomy" id="5757"/>
</organismHost>
<sequence>MSILQILDNDVLRNIIDYLDLKDETAFVSTCQYLYYYRKTFRRIYRLEKIIVFKLKNPDHIIPENTTHLVVTFNQSIGKINIPKNVSRLTFCPQFNKSIDDIPSTITHLSLGAAFNGEVSNIPTSVTHLKLGVSFKRKLSEIPLSVTHLTLNSYDTEIHGPIPSTITHLAFAEDFNQSINGLVPNFVGHLRIRQYNSNLEIPNHIYHLSLNSYEYNKQNELPNYIKFLDIRYIFPVKYKFIPETVTHLSFGNWFNANITTIIPNITHLVIKSCYECLIKNKIPDNITHLILY</sequence>
<reference key="1">
    <citation type="journal article" date="2004" name="Science">
        <title>The 1.2-megabase genome sequence of Mimivirus.</title>
        <authorList>
            <person name="Raoult D."/>
            <person name="Audic S."/>
            <person name="Robert C."/>
            <person name="Abergel C."/>
            <person name="Renesto P."/>
            <person name="Ogata H."/>
            <person name="La Scola B."/>
            <person name="Susan M."/>
            <person name="Claverie J.-M."/>
        </authorList>
    </citation>
    <scope>NUCLEOTIDE SEQUENCE [LARGE SCALE GENOMIC DNA]</scope>
    <source>
        <strain>Rowbotham-Bradford</strain>
    </source>
</reference>
<gene>
    <name type="ordered locus">MIMI_L281</name>
</gene>